<reference key="1">
    <citation type="submission" date="2009-07" db="EMBL/GenBank/DDBJ databases">
        <authorList>
            <person name="Kropinski A.M."/>
            <person name="Villegas A."/>
            <person name="Lingohr E.J."/>
        </authorList>
    </citation>
    <scope>NUCLEOTIDE SEQUENCE [GENOMIC DNA]</scope>
</reference>
<reference key="2">
    <citation type="journal article" date="1990" name="Nucleic Acids Res.">
        <title>Sequence of gene E15 of bacteriophage D108 and comparison with phage Mu.</title>
        <authorList>
            <person name="Pato M.L."/>
            <person name="Banerjee M."/>
            <person name="Wagonner B.T."/>
        </authorList>
    </citation>
    <scope>NUCLEOTIDE SEQUENCE [GENOMIC DNA] OF 1-26</scope>
</reference>
<feature type="chain" id="PRO_0000077788" description="GemA protein">
    <location>
        <begin position="1"/>
        <end position="183"/>
    </location>
</feature>
<comment type="function">
    <text evidence="1">Early protein responsible for decreasing host DNA gyrase activity. Promotes DNA relaxation of bacterial host genome. Modulates the expression of various host genes probably controlled by supercoiling of their promoters. Host genes affected include DNA replication and cell division determinants (By similarity).</text>
</comment>
<comment type="subunit">
    <text evidence="1">Homodimer.</text>
</comment>
<comment type="subcellular location">
    <subcellularLocation>
        <location evidence="1">Host cytoplasm</location>
    </subcellularLocation>
</comment>
<comment type="induction">
    <text evidence="2">This protein is constitively expressed from the Pgem promoter unlike most other early proteins which are expressed under the control of the Pe promoter. Its expression seems to escape repression by repressor protein c and thus occurs throughout latency (Probable).</text>
</comment>
<comment type="similarity">
    <text evidence="2">Belongs to the mulikevirus gemA protein family.</text>
</comment>
<sequence length="183" mass="21218">MSRTSLIKLIHVARRELQLDDDTYRAFLMQKTGKISCRELTVTQLEQVLDAMKERGFKKLNKYPRRRFKEHVTPREKVYKIWQQMAEDGFITDGGDVALDKYVQRLTAKRNGGQGVSTLAWCHGESLQVVLETLKQWHIRCIREAFSRHGLPLPVSPSGRELRGYDAMTAAYAHARKTRRMAQ</sequence>
<name>GEMA_BPD10</name>
<evidence type="ECO:0000250" key="1"/>
<evidence type="ECO:0000305" key="2"/>
<accession>P24796</accession>
<accession>C9DGM3</accession>
<dbReference type="EMBL" id="X54298">
    <property type="protein sequence ID" value="CAA38198.1"/>
    <property type="molecule type" value="Genomic_DNA"/>
</dbReference>
<dbReference type="EMBL" id="GQ357916">
    <property type="protein sequence ID" value="ACV50274.1"/>
    <property type="molecule type" value="Genomic_DNA"/>
</dbReference>
<dbReference type="PIR" id="S12146">
    <property type="entry name" value="S12146"/>
</dbReference>
<dbReference type="RefSeq" id="YP_003335763.1">
    <property type="nucleotide sequence ID" value="NC_013594.1"/>
</dbReference>
<dbReference type="SMR" id="P24796"/>
<dbReference type="GeneID" id="8658826"/>
<dbReference type="KEGG" id="vg:8658826"/>
<dbReference type="OrthoDB" id="9495at10239"/>
<dbReference type="Proteomes" id="UP000000320">
    <property type="component" value="Genome"/>
</dbReference>
<dbReference type="GO" id="GO:0030430">
    <property type="term" value="C:host cell cytoplasm"/>
    <property type="evidence" value="ECO:0007669"/>
    <property type="project" value="UniProtKB-SubCell"/>
</dbReference>
<dbReference type="GO" id="GO:0044071">
    <property type="term" value="P:symbiont-mediated perturbation of host cell cycle progression"/>
    <property type="evidence" value="ECO:0007669"/>
    <property type="project" value="UniProtKB-KW"/>
</dbReference>
<dbReference type="InterPro" id="IPR009363">
    <property type="entry name" value="Phage_Mu_Gp16"/>
</dbReference>
<dbReference type="Pfam" id="PF06252">
    <property type="entry name" value="GemA"/>
    <property type="match status" value="1"/>
</dbReference>
<gene>
    <name type="primary">gemA</name>
</gene>
<organism>
    <name type="scientific">Escherichia phage D108</name>
    <name type="common">Bacteriophage D108</name>
    <dbReference type="NCBI Taxonomy" id="665033"/>
    <lineage>
        <taxon>Viruses</taxon>
        <taxon>Duplodnaviria</taxon>
        <taxon>Heunggongvirae</taxon>
        <taxon>Uroviricota</taxon>
        <taxon>Caudoviricetes</taxon>
        <taxon>Muvirus</taxon>
        <taxon>Muvirus mu</taxon>
    </lineage>
</organism>
<organismHost>
    <name type="scientific">Escherichia coli</name>
    <dbReference type="NCBI Taxonomy" id="562"/>
</organismHost>
<proteinExistence type="inferred from homology"/>
<protein>
    <recommendedName>
        <fullName>GemA protein</fullName>
    </recommendedName>
    <alternativeName>
        <fullName>Gene product 16</fullName>
        <shortName>gp16</shortName>
    </alternativeName>
</protein>
<keyword id="KW-0244">Early protein</keyword>
<keyword id="KW-1035">Host cytoplasm</keyword>
<keyword id="KW-0945">Host-virus interaction</keyword>
<keyword id="KW-1121">Modulation of host cell cycle by virus</keyword>